<gene>
    <name evidence="1" type="primary">ruvB</name>
    <name type="ordered locus">SAUSA300_1597</name>
</gene>
<proteinExistence type="inferred from homology"/>
<feature type="chain" id="PRO_0000235409" description="Holliday junction branch migration complex subunit RuvB">
    <location>
        <begin position="1"/>
        <end position="334"/>
    </location>
</feature>
<feature type="region of interest" description="Large ATPase domain (RuvB-L)" evidence="1">
    <location>
        <begin position="1"/>
        <end position="182"/>
    </location>
</feature>
<feature type="region of interest" description="Small ATPAse domain (RuvB-S)" evidence="1">
    <location>
        <begin position="183"/>
        <end position="253"/>
    </location>
</feature>
<feature type="region of interest" description="Head domain (RuvB-H)" evidence="1">
    <location>
        <begin position="256"/>
        <end position="334"/>
    </location>
</feature>
<feature type="binding site" evidence="1">
    <location>
        <position position="21"/>
    </location>
    <ligand>
        <name>ATP</name>
        <dbReference type="ChEBI" id="CHEBI:30616"/>
    </ligand>
</feature>
<feature type="binding site" evidence="1">
    <location>
        <position position="22"/>
    </location>
    <ligand>
        <name>ATP</name>
        <dbReference type="ChEBI" id="CHEBI:30616"/>
    </ligand>
</feature>
<feature type="binding site" evidence="1">
    <location>
        <position position="63"/>
    </location>
    <ligand>
        <name>ATP</name>
        <dbReference type="ChEBI" id="CHEBI:30616"/>
    </ligand>
</feature>
<feature type="binding site" evidence="1">
    <location>
        <position position="66"/>
    </location>
    <ligand>
        <name>ATP</name>
        <dbReference type="ChEBI" id="CHEBI:30616"/>
    </ligand>
</feature>
<feature type="binding site" evidence="1">
    <location>
        <position position="67"/>
    </location>
    <ligand>
        <name>ATP</name>
        <dbReference type="ChEBI" id="CHEBI:30616"/>
    </ligand>
</feature>
<feature type="binding site" evidence="1">
    <location>
        <position position="67"/>
    </location>
    <ligand>
        <name>Mg(2+)</name>
        <dbReference type="ChEBI" id="CHEBI:18420"/>
    </ligand>
</feature>
<feature type="binding site" evidence="1">
    <location>
        <position position="68"/>
    </location>
    <ligand>
        <name>ATP</name>
        <dbReference type="ChEBI" id="CHEBI:30616"/>
    </ligand>
</feature>
<feature type="binding site" evidence="1">
    <location>
        <begin position="129"/>
        <end position="131"/>
    </location>
    <ligand>
        <name>ATP</name>
        <dbReference type="ChEBI" id="CHEBI:30616"/>
    </ligand>
</feature>
<feature type="binding site" evidence="1">
    <location>
        <position position="172"/>
    </location>
    <ligand>
        <name>ATP</name>
        <dbReference type="ChEBI" id="CHEBI:30616"/>
    </ligand>
</feature>
<feature type="binding site" evidence="1">
    <location>
        <position position="182"/>
    </location>
    <ligand>
        <name>ATP</name>
        <dbReference type="ChEBI" id="CHEBI:30616"/>
    </ligand>
</feature>
<feature type="binding site" evidence="1">
    <location>
        <position position="219"/>
    </location>
    <ligand>
        <name>ATP</name>
        <dbReference type="ChEBI" id="CHEBI:30616"/>
    </ligand>
</feature>
<feature type="binding site" evidence="1">
    <location>
        <position position="292"/>
    </location>
    <ligand>
        <name>DNA</name>
        <dbReference type="ChEBI" id="CHEBI:16991"/>
    </ligand>
</feature>
<feature type="binding site" evidence="1">
    <location>
        <position position="311"/>
    </location>
    <ligand>
        <name>DNA</name>
        <dbReference type="ChEBI" id="CHEBI:16991"/>
    </ligand>
</feature>
<feature type="binding site" evidence="1">
    <location>
        <position position="316"/>
    </location>
    <ligand>
        <name>DNA</name>
        <dbReference type="ChEBI" id="CHEBI:16991"/>
    </ligand>
</feature>
<name>RUVB_STAA3</name>
<dbReference type="EC" id="3.6.4.-" evidence="1"/>
<dbReference type="EMBL" id="CP000255">
    <property type="protein sequence ID" value="ABD20890.1"/>
    <property type="molecule type" value="Genomic_DNA"/>
</dbReference>
<dbReference type="RefSeq" id="WP_001005767.1">
    <property type="nucleotide sequence ID" value="NZ_CP027476.1"/>
</dbReference>
<dbReference type="SMR" id="Q2FG86"/>
<dbReference type="KEGG" id="saa:SAUSA300_1597"/>
<dbReference type="HOGENOM" id="CLU_055599_1_0_9"/>
<dbReference type="OMA" id="IHRMSRP"/>
<dbReference type="Proteomes" id="UP000001939">
    <property type="component" value="Chromosome"/>
</dbReference>
<dbReference type="GO" id="GO:0005737">
    <property type="term" value="C:cytoplasm"/>
    <property type="evidence" value="ECO:0007669"/>
    <property type="project" value="UniProtKB-SubCell"/>
</dbReference>
<dbReference type="GO" id="GO:0048476">
    <property type="term" value="C:Holliday junction resolvase complex"/>
    <property type="evidence" value="ECO:0007669"/>
    <property type="project" value="UniProtKB-UniRule"/>
</dbReference>
<dbReference type="GO" id="GO:0005524">
    <property type="term" value="F:ATP binding"/>
    <property type="evidence" value="ECO:0007669"/>
    <property type="project" value="UniProtKB-UniRule"/>
</dbReference>
<dbReference type="GO" id="GO:0016887">
    <property type="term" value="F:ATP hydrolysis activity"/>
    <property type="evidence" value="ECO:0007669"/>
    <property type="project" value="InterPro"/>
</dbReference>
<dbReference type="GO" id="GO:0000400">
    <property type="term" value="F:four-way junction DNA binding"/>
    <property type="evidence" value="ECO:0007669"/>
    <property type="project" value="UniProtKB-UniRule"/>
</dbReference>
<dbReference type="GO" id="GO:0009378">
    <property type="term" value="F:four-way junction helicase activity"/>
    <property type="evidence" value="ECO:0007669"/>
    <property type="project" value="InterPro"/>
</dbReference>
<dbReference type="GO" id="GO:0006310">
    <property type="term" value="P:DNA recombination"/>
    <property type="evidence" value="ECO:0007669"/>
    <property type="project" value="UniProtKB-UniRule"/>
</dbReference>
<dbReference type="GO" id="GO:0006281">
    <property type="term" value="P:DNA repair"/>
    <property type="evidence" value="ECO:0007669"/>
    <property type="project" value="UniProtKB-UniRule"/>
</dbReference>
<dbReference type="CDD" id="cd00009">
    <property type="entry name" value="AAA"/>
    <property type="match status" value="1"/>
</dbReference>
<dbReference type="Gene3D" id="1.10.8.60">
    <property type="match status" value="1"/>
</dbReference>
<dbReference type="Gene3D" id="3.40.50.300">
    <property type="entry name" value="P-loop containing nucleotide triphosphate hydrolases"/>
    <property type="match status" value="1"/>
</dbReference>
<dbReference type="Gene3D" id="1.10.10.10">
    <property type="entry name" value="Winged helix-like DNA-binding domain superfamily/Winged helix DNA-binding domain"/>
    <property type="match status" value="1"/>
</dbReference>
<dbReference type="HAMAP" id="MF_00016">
    <property type="entry name" value="DNA_HJ_migration_RuvB"/>
    <property type="match status" value="1"/>
</dbReference>
<dbReference type="InterPro" id="IPR003593">
    <property type="entry name" value="AAA+_ATPase"/>
</dbReference>
<dbReference type="InterPro" id="IPR041445">
    <property type="entry name" value="AAA_lid_4"/>
</dbReference>
<dbReference type="InterPro" id="IPR004605">
    <property type="entry name" value="DNA_helicase_Holl-junc_RuvB"/>
</dbReference>
<dbReference type="InterPro" id="IPR027417">
    <property type="entry name" value="P-loop_NTPase"/>
</dbReference>
<dbReference type="InterPro" id="IPR008824">
    <property type="entry name" value="RuvB-like_N"/>
</dbReference>
<dbReference type="InterPro" id="IPR008823">
    <property type="entry name" value="RuvB_C"/>
</dbReference>
<dbReference type="InterPro" id="IPR036388">
    <property type="entry name" value="WH-like_DNA-bd_sf"/>
</dbReference>
<dbReference type="InterPro" id="IPR036390">
    <property type="entry name" value="WH_DNA-bd_sf"/>
</dbReference>
<dbReference type="NCBIfam" id="NF000868">
    <property type="entry name" value="PRK00080.1"/>
    <property type="match status" value="1"/>
</dbReference>
<dbReference type="NCBIfam" id="TIGR00635">
    <property type="entry name" value="ruvB"/>
    <property type="match status" value="1"/>
</dbReference>
<dbReference type="PANTHER" id="PTHR42848">
    <property type="match status" value="1"/>
</dbReference>
<dbReference type="PANTHER" id="PTHR42848:SF1">
    <property type="entry name" value="HOLLIDAY JUNCTION BRANCH MIGRATION COMPLEX SUBUNIT RUVB"/>
    <property type="match status" value="1"/>
</dbReference>
<dbReference type="Pfam" id="PF17864">
    <property type="entry name" value="AAA_lid_4"/>
    <property type="match status" value="1"/>
</dbReference>
<dbReference type="Pfam" id="PF05491">
    <property type="entry name" value="RuvB_C"/>
    <property type="match status" value="1"/>
</dbReference>
<dbReference type="Pfam" id="PF05496">
    <property type="entry name" value="RuvB_N"/>
    <property type="match status" value="1"/>
</dbReference>
<dbReference type="SMART" id="SM00382">
    <property type="entry name" value="AAA"/>
    <property type="match status" value="1"/>
</dbReference>
<dbReference type="SUPFAM" id="SSF52540">
    <property type="entry name" value="P-loop containing nucleoside triphosphate hydrolases"/>
    <property type="match status" value="1"/>
</dbReference>
<dbReference type="SUPFAM" id="SSF46785">
    <property type="entry name" value="Winged helix' DNA-binding domain"/>
    <property type="match status" value="1"/>
</dbReference>
<reference key="1">
    <citation type="journal article" date="2006" name="Lancet">
        <title>Complete genome sequence of USA300, an epidemic clone of community-acquired meticillin-resistant Staphylococcus aureus.</title>
        <authorList>
            <person name="Diep B.A."/>
            <person name="Gill S.R."/>
            <person name="Chang R.F."/>
            <person name="Phan T.H."/>
            <person name="Chen J.H."/>
            <person name="Davidson M.G."/>
            <person name="Lin F."/>
            <person name="Lin J."/>
            <person name="Carleton H.A."/>
            <person name="Mongodin E.F."/>
            <person name="Sensabaugh G.F."/>
            <person name="Perdreau-Remington F."/>
        </authorList>
    </citation>
    <scope>NUCLEOTIDE SEQUENCE [LARGE SCALE GENOMIC DNA]</scope>
    <source>
        <strain>USA300</strain>
    </source>
</reference>
<comment type="function">
    <text evidence="1">The RuvA-RuvB-RuvC complex processes Holliday junction (HJ) DNA during genetic recombination and DNA repair, while the RuvA-RuvB complex plays an important role in the rescue of blocked DNA replication forks via replication fork reversal (RFR). RuvA specifically binds to HJ cruciform DNA, conferring on it an open structure. The RuvB hexamer acts as an ATP-dependent pump, pulling dsDNA into and through the RuvAB complex. RuvB forms 2 homohexamers on either side of HJ DNA bound by 1 or 2 RuvA tetramers; 4 subunits per hexamer contact DNA at a time. Coordinated motions by a converter formed by DNA-disengaged RuvB subunits stimulates ATP hydrolysis and nucleotide exchange. Immobilization of the converter enables RuvB to convert the ATP-contained energy into a lever motion, pulling 2 nucleotides of DNA out of the RuvA tetramer per ATP hydrolyzed, thus driving DNA branch migration. The RuvB motors rotate together with the DNA substrate, which together with the progressing nucleotide cycle form the mechanistic basis for DNA recombination by continuous HJ branch migration. Branch migration allows RuvC to scan DNA until it finds its consensus sequence, where it cleaves and resolves cruciform DNA.</text>
</comment>
<comment type="catalytic activity">
    <reaction evidence="1">
        <text>ATP + H2O = ADP + phosphate + H(+)</text>
        <dbReference type="Rhea" id="RHEA:13065"/>
        <dbReference type="ChEBI" id="CHEBI:15377"/>
        <dbReference type="ChEBI" id="CHEBI:15378"/>
        <dbReference type="ChEBI" id="CHEBI:30616"/>
        <dbReference type="ChEBI" id="CHEBI:43474"/>
        <dbReference type="ChEBI" id="CHEBI:456216"/>
    </reaction>
</comment>
<comment type="subunit">
    <text evidence="1">Homohexamer. Forms an RuvA(8)-RuvB(12)-Holliday junction (HJ) complex. HJ DNA is sandwiched between 2 RuvA tetramers; dsDNA enters through RuvA and exits via RuvB. An RuvB hexamer assembles on each DNA strand where it exits the tetramer. Each RuvB hexamer is contacted by two RuvA subunits (via domain III) on 2 adjacent RuvB subunits; this complex drives branch migration. In the full resolvosome a probable DNA-RuvA(4)-RuvB(12)-RuvC(2) complex forms which resolves the HJ.</text>
</comment>
<comment type="subcellular location">
    <subcellularLocation>
        <location evidence="1">Cytoplasm</location>
    </subcellularLocation>
</comment>
<comment type="domain">
    <text evidence="1">Has 3 domains, the large (RuvB-L) and small ATPase (RuvB-S) domains and the C-terminal head (RuvB-H) domain. The head domain binds DNA, while the ATPase domains jointly bind ATP, ADP or are empty depending on the state of the subunit in the translocation cycle. During a single DNA translocation step the structure of each domain remains the same, but their relative positions change.</text>
</comment>
<comment type="similarity">
    <text evidence="1">Belongs to the RuvB family.</text>
</comment>
<organism>
    <name type="scientific">Staphylococcus aureus (strain USA300)</name>
    <dbReference type="NCBI Taxonomy" id="367830"/>
    <lineage>
        <taxon>Bacteria</taxon>
        <taxon>Bacillati</taxon>
        <taxon>Bacillota</taxon>
        <taxon>Bacilli</taxon>
        <taxon>Bacillales</taxon>
        <taxon>Staphylococcaceae</taxon>
        <taxon>Staphylococcus</taxon>
    </lineage>
</organism>
<accession>Q2FG86</accession>
<sequence>MNERMVDQSMHSEETDFELSLRPTRLRQYIGQNSIKSNLEVFIKAAKLRHEPLDHVLLFGPPGLGKTTLSNIIANEMEVNIRTVSGPSLERPGDLAAILSGLQPGDVLFIDEIHRLSSVVEEVLYPAMEDFFLDIIIGKGDEARSIRIDLPPFTLVGATTRAGSLTGPLRDRFGVHLRLEYYNESDLKEIIIRTAEVLGTGIDEESAIELAKRSRGTPRVANRLLKRVRDFQQVNEDEQIYIETTKHALGLLQVDQHGLDYIDHKMMNCIIKQYNGGPVGLDTIAVTIGEERITIEDVYEPFLIQKGFLERTPRGRKATPLAYEHFAKSNEERE</sequence>
<keyword id="KW-0067">ATP-binding</keyword>
<keyword id="KW-0963">Cytoplasm</keyword>
<keyword id="KW-0227">DNA damage</keyword>
<keyword id="KW-0233">DNA recombination</keyword>
<keyword id="KW-0234">DNA repair</keyword>
<keyword id="KW-0238">DNA-binding</keyword>
<keyword id="KW-0378">Hydrolase</keyword>
<keyword id="KW-0547">Nucleotide-binding</keyword>
<protein>
    <recommendedName>
        <fullName evidence="1">Holliday junction branch migration complex subunit RuvB</fullName>
        <ecNumber evidence="1">3.6.4.-</ecNumber>
    </recommendedName>
</protein>
<evidence type="ECO:0000255" key="1">
    <source>
        <dbReference type="HAMAP-Rule" id="MF_00016"/>
    </source>
</evidence>